<proteinExistence type="predicted"/>
<dbReference type="EMBL" id="AF440571">
    <property type="protein sequence ID" value="AAL27736.1"/>
    <property type="molecule type" value="Genomic_DNA"/>
</dbReference>
<dbReference type="RefSeq" id="NP_445690.1">
    <property type="nucleotide sequence ID" value="NC_003214.2"/>
</dbReference>
<dbReference type="SMR" id="Q914K5"/>
<dbReference type="GeneID" id="922348"/>
<dbReference type="KEGG" id="vg:922348"/>
<dbReference type="Proteomes" id="UP000007017">
    <property type="component" value="Segment"/>
</dbReference>
<keyword id="KW-1185">Reference proteome</keyword>
<reference key="1">
    <citation type="journal article" date="2000" name="Virology">
        <title>A novel lipothrixvirus, SIFV, of the extremely thermophilic crenarchaeon Sulfolobus.</title>
        <authorList>
            <person name="Arnold H.P."/>
            <person name="Zillig W."/>
            <person name="Ziese U."/>
            <person name="Holz I."/>
            <person name="Crosby M."/>
            <person name="Utterback T."/>
            <person name="Weidmann J.F."/>
            <person name="Umayam L.A."/>
            <person name="Teffera K."/>
            <person name="Kristjanson J.K."/>
            <person name="Klenk H.P."/>
            <person name="Nelson K.E."/>
            <person name="Fraser C.M."/>
        </authorList>
    </citation>
    <scope>NUCLEOTIDE SEQUENCE [GENOMIC DNA]</scope>
</reference>
<gene>
    <name type="primary">SIFV0025</name>
</gene>
<protein>
    <recommendedName>
        <fullName>Uncharacterized protein 25</fullName>
    </recommendedName>
</protein>
<accession>Q914K5</accession>
<organism>
    <name type="scientific">Sulfolobus islandicus filamentous virus (isolate Iceland/Hveragerdi)</name>
    <name type="common">SIFV</name>
    <dbReference type="NCBI Taxonomy" id="654908"/>
    <lineage>
        <taxon>Viruses</taxon>
        <taxon>Adnaviria</taxon>
        <taxon>Zilligvirae</taxon>
        <taxon>Taleaviricota</taxon>
        <taxon>Tokiviricetes</taxon>
        <taxon>Ligamenvirales</taxon>
        <taxon>Lipothrixviridae</taxon>
        <taxon>Betalipothrixvirus</taxon>
        <taxon>Sulfolobus islandicus filamentous virus</taxon>
    </lineage>
</organism>
<organismHost>
    <name type="scientific">Saccharolobus islandicus</name>
    <name type="common">Sulfolobus islandicus</name>
    <dbReference type="NCBI Taxonomy" id="43080"/>
</organismHost>
<sequence>MIYTIRISKKYFYKLVNMCKEYKSYRECVMKELEKKYQVKIYNSTRSHDMNIKNDLIPKVINIIFYDQENERLEELAQRLGKTKYEIIISLFK</sequence>
<feature type="chain" id="PRO_0000385389" description="Uncharacterized protein 25">
    <location>
        <begin position="1"/>
        <end position="93"/>
    </location>
</feature>
<name>Y025_SIFVH</name>